<gene>
    <name evidence="1" type="primary">astB</name>
    <name type="ordered locus">EcHS_A1828</name>
</gene>
<comment type="function">
    <text evidence="1">Catalyzes the hydrolysis of N(2)-succinylarginine into N(2)-succinylornithine, ammonia and CO(2).</text>
</comment>
<comment type="catalytic activity">
    <reaction evidence="1">
        <text>N(2)-succinyl-L-arginine + 2 H2O + 2 H(+) = N(2)-succinyl-L-ornithine + 2 NH4(+) + CO2</text>
        <dbReference type="Rhea" id="RHEA:19533"/>
        <dbReference type="ChEBI" id="CHEBI:15377"/>
        <dbReference type="ChEBI" id="CHEBI:15378"/>
        <dbReference type="ChEBI" id="CHEBI:16526"/>
        <dbReference type="ChEBI" id="CHEBI:28938"/>
        <dbReference type="ChEBI" id="CHEBI:58241"/>
        <dbReference type="ChEBI" id="CHEBI:58514"/>
        <dbReference type="EC" id="3.5.3.23"/>
    </reaction>
</comment>
<comment type="pathway">
    <text evidence="1">Amino-acid degradation; L-arginine degradation via AST pathway; L-glutamate and succinate from L-arginine: step 2/5.</text>
</comment>
<comment type="subunit">
    <text evidence="1">Homodimer.</text>
</comment>
<comment type="similarity">
    <text evidence="1">Belongs to the succinylarginine dihydrolase family.</text>
</comment>
<proteinExistence type="inferred from homology"/>
<accession>A8A0T7</accession>
<keyword id="KW-0056">Arginine metabolism</keyword>
<keyword id="KW-0378">Hydrolase</keyword>
<dbReference type="EC" id="3.5.3.23" evidence="1"/>
<dbReference type="EMBL" id="CP000802">
    <property type="protein sequence ID" value="ABV06141.1"/>
    <property type="molecule type" value="Genomic_DNA"/>
</dbReference>
<dbReference type="RefSeq" id="WP_000995019.1">
    <property type="nucleotide sequence ID" value="NC_009800.1"/>
</dbReference>
<dbReference type="SMR" id="A8A0T7"/>
<dbReference type="KEGG" id="ecx:EcHS_A1828"/>
<dbReference type="HOGENOM" id="CLU_053835_0_0_6"/>
<dbReference type="UniPathway" id="UPA00185">
    <property type="reaction ID" value="UER00280"/>
</dbReference>
<dbReference type="GO" id="GO:0009015">
    <property type="term" value="F:N-succinylarginine dihydrolase activity"/>
    <property type="evidence" value="ECO:0007669"/>
    <property type="project" value="UniProtKB-UniRule"/>
</dbReference>
<dbReference type="GO" id="GO:0019544">
    <property type="term" value="P:arginine catabolic process to glutamate"/>
    <property type="evidence" value="ECO:0007669"/>
    <property type="project" value="UniProtKB-UniRule"/>
</dbReference>
<dbReference type="GO" id="GO:0019545">
    <property type="term" value="P:arginine catabolic process to succinate"/>
    <property type="evidence" value="ECO:0007669"/>
    <property type="project" value="UniProtKB-UniRule"/>
</dbReference>
<dbReference type="FunFam" id="3.75.10.20:FF:000001">
    <property type="entry name" value="N-succinylarginine dihydrolase"/>
    <property type="match status" value="1"/>
</dbReference>
<dbReference type="Gene3D" id="3.75.10.20">
    <property type="entry name" value="Succinylarginine dihydrolase"/>
    <property type="match status" value="1"/>
</dbReference>
<dbReference type="HAMAP" id="MF_01172">
    <property type="entry name" value="AstB"/>
    <property type="match status" value="1"/>
</dbReference>
<dbReference type="InterPro" id="IPR037031">
    <property type="entry name" value="AstB_sf"/>
</dbReference>
<dbReference type="InterPro" id="IPR007079">
    <property type="entry name" value="SuccinylArg_d-Hdrlase_AstB"/>
</dbReference>
<dbReference type="NCBIfam" id="TIGR03241">
    <property type="entry name" value="arg_catab_astB"/>
    <property type="match status" value="1"/>
</dbReference>
<dbReference type="NCBIfam" id="NF009789">
    <property type="entry name" value="PRK13281.1"/>
    <property type="match status" value="1"/>
</dbReference>
<dbReference type="PANTHER" id="PTHR30420">
    <property type="entry name" value="N-SUCCINYLARGININE DIHYDROLASE"/>
    <property type="match status" value="1"/>
</dbReference>
<dbReference type="PANTHER" id="PTHR30420:SF2">
    <property type="entry name" value="N-SUCCINYLARGININE DIHYDROLASE"/>
    <property type="match status" value="1"/>
</dbReference>
<dbReference type="Pfam" id="PF04996">
    <property type="entry name" value="AstB"/>
    <property type="match status" value="1"/>
</dbReference>
<dbReference type="SUPFAM" id="SSF55909">
    <property type="entry name" value="Pentein"/>
    <property type="match status" value="1"/>
</dbReference>
<name>ASTB_ECOHS</name>
<protein>
    <recommendedName>
        <fullName evidence="1">N-succinylarginine dihydrolase</fullName>
        <ecNumber evidence="1">3.5.3.23</ecNumber>
    </recommendedName>
</protein>
<reference key="1">
    <citation type="journal article" date="2008" name="J. Bacteriol.">
        <title>The pangenome structure of Escherichia coli: comparative genomic analysis of E. coli commensal and pathogenic isolates.</title>
        <authorList>
            <person name="Rasko D.A."/>
            <person name="Rosovitz M.J."/>
            <person name="Myers G.S.A."/>
            <person name="Mongodin E.F."/>
            <person name="Fricke W.F."/>
            <person name="Gajer P."/>
            <person name="Crabtree J."/>
            <person name="Sebaihia M."/>
            <person name="Thomson N.R."/>
            <person name="Chaudhuri R."/>
            <person name="Henderson I.R."/>
            <person name="Sperandio V."/>
            <person name="Ravel J."/>
        </authorList>
    </citation>
    <scope>NUCLEOTIDE SEQUENCE [LARGE SCALE GENOMIC DNA]</scope>
    <source>
        <strain>HS</strain>
    </source>
</reference>
<feature type="chain" id="PRO_1000065724" description="N-succinylarginine dihydrolase">
    <location>
        <begin position="1"/>
        <end position="447"/>
    </location>
</feature>
<feature type="active site" evidence="1">
    <location>
        <position position="174"/>
    </location>
</feature>
<feature type="active site" evidence="1">
    <location>
        <position position="248"/>
    </location>
</feature>
<feature type="active site" description="Nucleophile" evidence="1">
    <location>
        <position position="365"/>
    </location>
</feature>
<feature type="binding site" evidence="1">
    <location>
        <begin position="19"/>
        <end position="28"/>
    </location>
    <ligand>
        <name>substrate</name>
    </ligand>
</feature>
<feature type="binding site" evidence="1">
    <location>
        <position position="110"/>
    </location>
    <ligand>
        <name>substrate</name>
    </ligand>
</feature>
<feature type="binding site" evidence="1">
    <location>
        <begin position="137"/>
        <end position="138"/>
    </location>
    <ligand>
        <name>substrate</name>
    </ligand>
</feature>
<feature type="binding site" evidence="1">
    <location>
        <position position="212"/>
    </location>
    <ligand>
        <name>substrate</name>
    </ligand>
</feature>
<feature type="binding site" evidence="1">
    <location>
        <position position="250"/>
    </location>
    <ligand>
        <name>substrate</name>
    </ligand>
</feature>
<feature type="binding site" evidence="1">
    <location>
        <position position="359"/>
    </location>
    <ligand>
        <name>substrate</name>
    </ligand>
</feature>
<evidence type="ECO:0000255" key="1">
    <source>
        <dbReference type="HAMAP-Rule" id="MF_01172"/>
    </source>
</evidence>
<organism>
    <name type="scientific">Escherichia coli O9:H4 (strain HS)</name>
    <dbReference type="NCBI Taxonomy" id="331112"/>
    <lineage>
        <taxon>Bacteria</taxon>
        <taxon>Pseudomonadati</taxon>
        <taxon>Pseudomonadota</taxon>
        <taxon>Gammaproteobacteria</taxon>
        <taxon>Enterobacterales</taxon>
        <taxon>Enterobacteriaceae</taxon>
        <taxon>Escherichia</taxon>
    </lineage>
</organism>
<sequence length="447" mass="49394">MNAWEVNFDGLVGLTHHYAGLSFGNEASTRHRFQVSNPRQAAKQGLLKMKTLADAGFPQAVIPPHERPFIPVLRQLGFSGSDEQVLEKVARQAPHWLSSVSSASPMWVANAATIAPSADTLDGKVHFTVANLNNKFHRSLEALVTESLLKAIFNDEEKFSVHSALPQVALLGDEGAANHNRLGGHYGEPGMQLFVYGREEGNDTRPSRYPARQTREASEAVARLNQVNPQQVIFAQQNPDVIDQGVFHNDVIAVSNRQVLFCHQQAFARQSQLLANLRARVNGFMAIEVPATQVSVSDTVSTYLFNSQLLSRDDGSMMLVLPQECREHAGVWGYLNELLAADNPISELKVFDLRESMANGGGPACLRLRVVLTEEERRAVNPAVMMNDTLFNALNDWVDRYYRDRLTAADLADPQLLREGREALDVLSQLLNLGSVYPFQREGGGNG</sequence>